<comment type="similarity">
    <text evidence="1">Belongs to the UPF0735 family.</text>
</comment>
<dbReference type="EMBL" id="CP000813">
    <property type="protein sequence ID" value="ABV63094.1"/>
    <property type="molecule type" value="Genomic_DNA"/>
</dbReference>
<dbReference type="RefSeq" id="WP_003216269.1">
    <property type="nucleotide sequence ID" value="NZ_VEIS01000010.1"/>
</dbReference>
<dbReference type="SMR" id="A8FFS7"/>
<dbReference type="STRING" id="315750.BPUM_2431"/>
<dbReference type="GeneID" id="5621695"/>
<dbReference type="KEGG" id="bpu:BPUM_2431"/>
<dbReference type="eggNOG" id="COG4492">
    <property type="taxonomic scope" value="Bacteria"/>
</dbReference>
<dbReference type="HOGENOM" id="CLU_128147_0_0_9"/>
<dbReference type="OrthoDB" id="9788773at2"/>
<dbReference type="Proteomes" id="UP000001355">
    <property type="component" value="Chromosome"/>
</dbReference>
<dbReference type="CDD" id="cd04888">
    <property type="entry name" value="ACT_PheB-BS"/>
    <property type="match status" value="1"/>
</dbReference>
<dbReference type="Gene3D" id="3.30.70.260">
    <property type="match status" value="1"/>
</dbReference>
<dbReference type="HAMAP" id="MF_00707">
    <property type="entry name" value="UPF0735"/>
    <property type="match status" value="1"/>
</dbReference>
<dbReference type="InterPro" id="IPR045865">
    <property type="entry name" value="ACT-like_dom_sf"/>
</dbReference>
<dbReference type="InterPro" id="IPR002912">
    <property type="entry name" value="ACT_dom"/>
</dbReference>
<dbReference type="InterPro" id="IPR008310">
    <property type="entry name" value="UPF0735_ACT_dom-cont"/>
</dbReference>
<dbReference type="NCBIfam" id="NF003361">
    <property type="entry name" value="PRK04435.1"/>
    <property type="match status" value="1"/>
</dbReference>
<dbReference type="Pfam" id="PF01842">
    <property type="entry name" value="ACT"/>
    <property type="match status" value="1"/>
</dbReference>
<dbReference type="PIRSF" id="PIRSF025624">
    <property type="entry name" value="ACT_PheB"/>
    <property type="match status" value="1"/>
</dbReference>
<dbReference type="SUPFAM" id="SSF55021">
    <property type="entry name" value="ACT-like"/>
    <property type="match status" value="1"/>
</dbReference>
<dbReference type="PROSITE" id="PS51671">
    <property type="entry name" value="ACT"/>
    <property type="match status" value="1"/>
</dbReference>
<accession>A8FFS7</accession>
<feature type="chain" id="PRO_0000366295" description="UPF0735 ACT domain-containing protein BPUM_2431">
    <location>
        <begin position="1"/>
        <end position="147"/>
    </location>
</feature>
<feature type="domain" description="ACT" evidence="1">
    <location>
        <begin position="70"/>
        <end position="145"/>
    </location>
</feature>
<organism>
    <name type="scientific">Bacillus pumilus (strain SAFR-032)</name>
    <dbReference type="NCBI Taxonomy" id="315750"/>
    <lineage>
        <taxon>Bacteria</taxon>
        <taxon>Bacillati</taxon>
        <taxon>Bacillota</taxon>
        <taxon>Bacilli</taxon>
        <taxon>Bacillales</taxon>
        <taxon>Bacillaceae</taxon>
        <taxon>Bacillus</taxon>
    </lineage>
</organism>
<reference key="1">
    <citation type="journal article" date="2007" name="PLoS ONE">
        <title>Paradoxical DNA repair and peroxide resistance gene conservation in Bacillus pumilus SAFR-032.</title>
        <authorList>
            <person name="Gioia J."/>
            <person name="Yerrapragada S."/>
            <person name="Qin X."/>
            <person name="Jiang H."/>
            <person name="Igboeli O.C."/>
            <person name="Muzny D."/>
            <person name="Dugan-Rocha S."/>
            <person name="Ding Y."/>
            <person name="Hawes A."/>
            <person name="Liu W."/>
            <person name="Perez L."/>
            <person name="Kovar C."/>
            <person name="Dinh H."/>
            <person name="Lee S."/>
            <person name="Nazareth L."/>
            <person name="Blyth P."/>
            <person name="Holder M."/>
            <person name="Buhay C."/>
            <person name="Tirumalai M.R."/>
            <person name="Liu Y."/>
            <person name="Dasgupta I."/>
            <person name="Bokhetache L."/>
            <person name="Fujita M."/>
            <person name="Karouia F."/>
            <person name="Eswara Moorthy P."/>
            <person name="Siefert J."/>
            <person name="Uzman A."/>
            <person name="Buzumbo P."/>
            <person name="Verma A."/>
            <person name="Zwiya H."/>
            <person name="McWilliams B.D."/>
            <person name="Olowu A."/>
            <person name="Clinkenbeard K.D."/>
            <person name="Newcombe D."/>
            <person name="Golebiewski L."/>
            <person name="Petrosino J.F."/>
            <person name="Nicholson W.L."/>
            <person name="Fox G.E."/>
            <person name="Venkateswaran K."/>
            <person name="Highlander S.K."/>
            <person name="Weinstock G.M."/>
        </authorList>
    </citation>
    <scope>NUCLEOTIDE SEQUENCE [LARGE SCALE GENOMIC DNA]</scope>
    <source>
        <strain>SAFR-032</strain>
    </source>
</reference>
<sequence length="147" mass="16558">MKEETFYLVREDVLPDAMRKTLEVKKLLDRKKADSVADAVQQADLSRSAFYKYRDAVFPFYTMVKEQIITLFFHLEDRSGALSRLLQIVADSGCNVLSIHQTIPLQGRANVTLSISTAGMADDINTVMNQLRKLEFVEKVEILGSGA</sequence>
<proteinExistence type="inferred from homology"/>
<protein>
    <recommendedName>
        <fullName evidence="1">UPF0735 ACT domain-containing protein BPUM_2431</fullName>
    </recommendedName>
</protein>
<name>Y2431_BACP2</name>
<gene>
    <name type="ordered locus">BPUM_2431</name>
</gene>
<evidence type="ECO:0000255" key="1">
    <source>
        <dbReference type="HAMAP-Rule" id="MF_00707"/>
    </source>
</evidence>